<feature type="chain" id="PRO_0000069190" description="B2 bradykinin receptor">
    <location>
        <begin position="1"/>
        <end position="391"/>
    </location>
</feature>
<feature type="topological domain" description="Extracellular" evidence="2">
    <location>
        <begin position="1"/>
        <end position="60"/>
    </location>
</feature>
<feature type="transmembrane region" description="Helical; Name=1" evidence="2">
    <location>
        <begin position="61"/>
        <end position="84"/>
    </location>
</feature>
<feature type="topological domain" description="Cytoplasmic" evidence="2">
    <location>
        <begin position="85"/>
        <end position="93"/>
    </location>
</feature>
<feature type="transmembrane region" description="Helical; Name=2" evidence="2">
    <location>
        <begin position="94"/>
        <end position="118"/>
    </location>
</feature>
<feature type="topological domain" description="Extracellular" evidence="2">
    <location>
        <begin position="119"/>
        <end position="131"/>
    </location>
</feature>
<feature type="transmembrane region" description="Helical; Name=3" evidence="2">
    <location>
        <begin position="132"/>
        <end position="153"/>
    </location>
</feature>
<feature type="topological domain" description="Cytoplasmic" evidence="2">
    <location>
        <begin position="154"/>
        <end position="175"/>
    </location>
</feature>
<feature type="transmembrane region" description="Helical; Name=4" evidence="2">
    <location>
        <begin position="176"/>
        <end position="198"/>
    </location>
</feature>
<feature type="topological domain" description="Extracellular" evidence="2">
    <location>
        <begin position="199"/>
        <end position="221"/>
    </location>
</feature>
<feature type="transmembrane region" description="Helical; Name=5" evidence="2">
    <location>
        <begin position="222"/>
        <end position="248"/>
    </location>
</feature>
<feature type="topological domain" description="Cytoplasmic" evidence="2">
    <location>
        <begin position="249"/>
        <end position="267"/>
    </location>
</feature>
<feature type="transmembrane region" description="Helical; Name=6" evidence="2">
    <location>
        <begin position="268"/>
        <end position="292"/>
    </location>
</feature>
<feature type="topological domain" description="Extracellular" evidence="2">
    <location>
        <begin position="293"/>
        <end position="311"/>
    </location>
</feature>
<feature type="transmembrane region" description="Helical; Name=7" evidence="2">
    <location>
        <begin position="312"/>
        <end position="335"/>
    </location>
</feature>
<feature type="topological domain" description="Cytoplasmic" evidence="2">
    <location>
        <begin position="336"/>
        <end position="391"/>
    </location>
</feature>
<feature type="modified residue" description="Phosphotyrosine" evidence="1">
    <location>
        <position position="156"/>
    </location>
</feature>
<feature type="modified residue" description="Phosphotyrosine" evidence="1">
    <location>
        <position position="347"/>
    </location>
</feature>
<feature type="modified residue" description="Phosphoserine" evidence="1">
    <location>
        <position position="366"/>
    </location>
</feature>
<feature type="modified residue" description="Phosphothreonine" evidence="1">
    <location>
        <position position="369"/>
    </location>
</feature>
<feature type="modified residue" description="Phosphoserine; by GRK6" evidence="4">
    <location>
        <position position="373"/>
    </location>
</feature>
<feature type="modified residue" description="Phosphoserine; by GRK6" evidence="4">
    <location>
        <position position="375"/>
    </location>
</feature>
<feature type="lipid moiety-binding region" description="S-palmitoyl cysteine" evidence="2">
    <location>
        <position position="351"/>
    </location>
</feature>
<feature type="glycosylation site" description="N-linked (GlcNAc...) asparagine" evidence="2">
    <location>
        <position position="30"/>
    </location>
</feature>
<feature type="glycosylation site" description="N-linked (GlcNAc...) asparagine" evidence="2">
    <location>
        <position position="39"/>
    </location>
</feature>
<feature type="glycosylation site" description="N-linked (GlcNAc...) asparagine" evidence="2">
    <location>
        <position position="207"/>
    </location>
</feature>
<feature type="disulfide bond" evidence="3">
    <location>
        <begin position="130"/>
        <end position="211"/>
    </location>
</feature>
<feature type="splice variant" id="VSP_001865" description="In isoform Short." evidence="11 12">
    <location>
        <begin position="1"/>
        <end position="27"/>
    </location>
</feature>
<feature type="sequence variant" id="VAR_003457" description="In dbSNP:rs1046248." evidence="8 10">
    <original>R</original>
    <variation>C</variation>
    <location>
        <position position="14"/>
    </location>
</feature>
<feature type="sequence variant" id="VAR_012284" description="In dbSNP:rs2227279." evidence="10">
    <original>G</original>
    <variation>E</variation>
    <location>
        <position position="354"/>
    </location>
</feature>
<feature type="helix" evidence="15">
    <location>
        <begin position="51"/>
        <end position="84"/>
    </location>
</feature>
<feature type="strand" evidence="15">
    <location>
        <begin position="85"/>
        <end position="87"/>
    </location>
</feature>
<feature type="helix" evidence="15">
    <location>
        <begin position="91"/>
        <end position="107"/>
    </location>
</feature>
<feature type="helix" evidence="15">
    <location>
        <begin position="110"/>
        <end position="118"/>
    </location>
</feature>
<feature type="turn" evidence="14">
    <location>
        <begin position="119"/>
        <end position="121"/>
    </location>
</feature>
<feature type="helix" evidence="15">
    <location>
        <begin position="126"/>
        <end position="159"/>
    </location>
</feature>
<feature type="turn" evidence="15">
    <location>
        <begin position="162"/>
        <end position="165"/>
    </location>
</feature>
<feature type="helix" evidence="15">
    <location>
        <begin position="166"/>
        <end position="168"/>
    </location>
</feature>
<feature type="helix" evidence="15">
    <location>
        <begin position="171"/>
        <end position="188"/>
    </location>
</feature>
<feature type="helix" evidence="15">
    <location>
        <begin position="190"/>
        <end position="194"/>
    </location>
</feature>
<feature type="strand" evidence="15">
    <location>
        <begin position="195"/>
        <end position="201"/>
    </location>
</feature>
<feature type="strand" evidence="15">
    <location>
        <begin position="208"/>
        <end position="213"/>
    </location>
</feature>
<feature type="helix" evidence="15">
    <location>
        <begin position="218"/>
        <end position="229"/>
    </location>
</feature>
<feature type="turn" evidence="15">
    <location>
        <begin position="230"/>
        <end position="233"/>
    </location>
</feature>
<feature type="helix" evidence="15">
    <location>
        <begin position="234"/>
        <end position="251"/>
    </location>
</feature>
<feature type="helix" evidence="15">
    <location>
        <begin position="254"/>
        <end position="256"/>
    </location>
</feature>
<feature type="helix" evidence="15">
    <location>
        <begin position="265"/>
        <end position="297"/>
    </location>
</feature>
<feature type="helix" evidence="15">
    <location>
        <begin position="304"/>
        <end position="320"/>
    </location>
</feature>
<feature type="helix" evidence="15">
    <location>
        <begin position="323"/>
        <end position="332"/>
    </location>
</feature>
<feature type="turn" evidence="15">
    <location>
        <begin position="333"/>
        <end position="335"/>
    </location>
</feature>
<feature type="helix" evidence="15">
    <location>
        <begin position="337"/>
        <end position="350"/>
    </location>
</feature>
<name>BKRB2_HUMAN</name>
<dbReference type="EMBL" id="M88714">
    <property type="protein sequence ID" value="AAB02793.1"/>
    <property type="molecule type" value="mRNA"/>
</dbReference>
<dbReference type="EMBL" id="S56772">
    <property type="protein sequence ID" value="AAB25765.1"/>
    <property type="molecule type" value="Genomic_DNA"/>
</dbReference>
<dbReference type="EMBL" id="X69680">
    <property type="protein sequence ID" value="CAA49360.1"/>
    <property type="molecule type" value="mRNA"/>
</dbReference>
<dbReference type="EMBL" id="S45489">
    <property type="protein sequence ID" value="AAB23467.1"/>
    <property type="molecule type" value="Genomic_DNA"/>
</dbReference>
<dbReference type="EMBL" id="L27594">
    <property type="status" value="NOT_ANNOTATED_CDS"/>
    <property type="molecule type" value="Genomic_DNA"/>
</dbReference>
<dbReference type="EMBL" id="X86165">
    <property type="protein sequence ID" value="CAA60109.1"/>
    <property type="molecule type" value="mRNA"/>
</dbReference>
<dbReference type="EMBL" id="X86164">
    <property type="protein sequence ID" value="CAA60108.1"/>
    <property type="molecule type" value="mRNA"/>
</dbReference>
<dbReference type="EMBL" id="AY275465">
    <property type="protein sequence ID" value="AAP32297.1"/>
    <property type="molecule type" value="mRNA"/>
</dbReference>
<dbReference type="EMBL" id="AF378542">
    <property type="protein sequence ID" value="AAK56376.1"/>
    <property type="molecule type" value="Genomic_DNA"/>
</dbReference>
<dbReference type="EMBL" id="BC074894">
    <property type="protein sequence ID" value="AAH74894.1"/>
    <property type="molecule type" value="mRNA"/>
</dbReference>
<dbReference type="EMBL" id="BC074895">
    <property type="protein sequence ID" value="AAH74895.1"/>
    <property type="molecule type" value="mRNA"/>
</dbReference>
<dbReference type="CCDS" id="CCDS9942.1">
    <molecule id="P30411-1"/>
</dbReference>
<dbReference type="PIR" id="JH0712">
    <property type="entry name" value="JQ1488"/>
</dbReference>
<dbReference type="RefSeq" id="NP_000614.1">
    <molecule id="P30411-1"/>
    <property type="nucleotide sequence ID" value="NM_000623.4"/>
</dbReference>
<dbReference type="RefSeq" id="NP_001366621.1">
    <molecule id="P30411-1"/>
    <property type="nucleotide sequence ID" value="NM_001379692.1"/>
</dbReference>
<dbReference type="PDB" id="7F2O">
    <property type="method" value="EM"/>
    <property type="resolution" value="2.90 A"/>
    <property type="chains" value="R=40-370"/>
</dbReference>
<dbReference type="PDB" id="7F6H">
    <property type="method" value="EM"/>
    <property type="resolution" value="2.90 A"/>
    <property type="chains" value="A=25-391"/>
</dbReference>
<dbReference type="PDB" id="7F6I">
    <property type="method" value="EM"/>
    <property type="resolution" value="2.80 A"/>
    <property type="chains" value="A=25-391"/>
</dbReference>
<dbReference type="PDBsum" id="7F2O"/>
<dbReference type="PDBsum" id="7F6H"/>
<dbReference type="PDBsum" id="7F6I"/>
<dbReference type="EMDB" id="EMD-31429"/>
<dbReference type="EMDB" id="EMD-31480"/>
<dbReference type="EMDB" id="EMD-31481"/>
<dbReference type="SMR" id="P30411"/>
<dbReference type="BioGRID" id="107093">
    <property type="interactions" value="28"/>
</dbReference>
<dbReference type="CORUM" id="P30411"/>
<dbReference type="FunCoup" id="P30411">
    <property type="interactions" value="1398"/>
</dbReference>
<dbReference type="IntAct" id="P30411">
    <property type="interactions" value="34"/>
</dbReference>
<dbReference type="MINT" id="P30411"/>
<dbReference type="STRING" id="9606.ENSP00000450482"/>
<dbReference type="BindingDB" id="P30411"/>
<dbReference type="ChEMBL" id="CHEMBL3157"/>
<dbReference type="DrugBank" id="DB05038">
    <property type="generic name" value="Anatibant"/>
</dbReference>
<dbReference type="DrugBank" id="DB12126">
    <property type="generic name" value="Bradykinin"/>
</dbReference>
<dbReference type="DrugBank" id="DB15646">
    <property type="generic name" value="Fasitibant"/>
</dbReference>
<dbReference type="DrugBank" id="DB06196">
    <property type="generic name" value="Icatibant"/>
</dbReference>
<dbReference type="DrugBank" id="DB06549">
    <property type="generic name" value="Labradimil"/>
</dbReference>
<dbReference type="DrugCentral" id="P30411"/>
<dbReference type="GuidetoPHARMACOLOGY" id="42"/>
<dbReference type="TCDB" id="9.A.14.13.27">
    <property type="family name" value="the g-protein-coupled receptor (gpcr) family"/>
</dbReference>
<dbReference type="GlyCosmos" id="P30411">
    <property type="glycosylation" value="3 sites, No reported glycans"/>
</dbReference>
<dbReference type="GlyGen" id="P30411">
    <property type="glycosylation" value="4 sites, 1 O-linked glycan (1 site)"/>
</dbReference>
<dbReference type="iPTMnet" id="P30411"/>
<dbReference type="PhosphoSitePlus" id="P30411"/>
<dbReference type="SwissPalm" id="P30411"/>
<dbReference type="BioMuta" id="BDKRB2"/>
<dbReference type="DMDM" id="2506481"/>
<dbReference type="MassIVE" id="P30411"/>
<dbReference type="PaxDb" id="9606-ENSP00000450482"/>
<dbReference type="PeptideAtlas" id="P30411"/>
<dbReference type="ProteomicsDB" id="54664">
    <molecule id="P30411-1"/>
</dbReference>
<dbReference type="ProteomicsDB" id="54665">
    <molecule id="P30411-2"/>
</dbReference>
<dbReference type="Antibodypedia" id="14184">
    <property type="antibodies" value="286 antibodies from 35 providers"/>
</dbReference>
<dbReference type="DNASU" id="624"/>
<dbReference type="Ensembl" id="ENST00000539359.1">
    <molecule id="P30411-2"/>
    <property type="protein sequence ID" value="ENSP00000438376.1"/>
    <property type="gene ID" value="ENSG00000168398.7"/>
</dbReference>
<dbReference type="Ensembl" id="ENST00000542454.2">
    <molecule id="P30411-2"/>
    <property type="protein sequence ID" value="ENSP00000439459.2"/>
    <property type="gene ID" value="ENSG00000168398.7"/>
</dbReference>
<dbReference type="Ensembl" id="ENST00000554311.2">
    <molecule id="P30411-1"/>
    <property type="protein sequence ID" value="ENSP00000450482.1"/>
    <property type="gene ID" value="ENSG00000168398.7"/>
</dbReference>
<dbReference type="GeneID" id="624"/>
<dbReference type="KEGG" id="hsa:624"/>
<dbReference type="MANE-Select" id="ENST00000554311.2">
    <property type="protein sequence ID" value="ENSP00000450482.1"/>
    <property type="RefSeq nucleotide sequence ID" value="NM_001379692.1"/>
    <property type="RefSeq protein sequence ID" value="NP_001366621.1"/>
</dbReference>
<dbReference type="UCSC" id="uc001yfg.3">
    <molecule id="P30411-1"/>
    <property type="organism name" value="human"/>
</dbReference>
<dbReference type="AGR" id="HGNC:1030"/>
<dbReference type="CTD" id="624"/>
<dbReference type="DisGeNET" id="624"/>
<dbReference type="GeneCards" id="BDKRB2"/>
<dbReference type="HGNC" id="HGNC:1030">
    <property type="gene designation" value="BDKRB2"/>
</dbReference>
<dbReference type="HPA" id="ENSG00000168398">
    <property type="expression patterns" value="Tissue enhanced (urinary)"/>
</dbReference>
<dbReference type="MIM" id="113503">
    <property type="type" value="gene"/>
</dbReference>
<dbReference type="neXtProt" id="NX_P30411"/>
<dbReference type="OpenTargets" id="ENSG00000168398"/>
<dbReference type="PharmGKB" id="PA80"/>
<dbReference type="VEuPathDB" id="HostDB:ENSG00000168398"/>
<dbReference type="eggNOG" id="ENOG502QTX6">
    <property type="taxonomic scope" value="Eukaryota"/>
</dbReference>
<dbReference type="GeneTree" id="ENSGT01130000278308"/>
<dbReference type="HOGENOM" id="CLU_009579_8_3_1"/>
<dbReference type="InParanoid" id="P30411"/>
<dbReference type="OMA" id="FNWPFGQ"/>
<dbReference type="OrthoDB" id="6076970at2759"/>
<dbReference type="PAN-GO" id="P30411">
    <property type="GO annotations" value="3 GO annotations based on evolutionary models"/>
</dbReference>
<dbReference type="PhylomeDB" id="P30411"/>
<dbReference type="TreeFam" id="TF330024"/>
<dbReference type="PathwayCommons" id="P30411"/>
<dbReference type="Reactome" id="R-HSA-375276">
    <property type="pathway name" value="Peptide ligand-binding receptors"/>
</dbReference>
<dbReference type="Reactome" id="R-HSA-416476">
    <property type="pathway name" value="G alpha (q) signalling events"/>
</dbReference>
<dbReference type="Reactome" id="R-HSA-418594">
    <property type="pathway name" value="G alpha (i) signalling events"/>
</dbReference>
<dbReference type="SignaLink" id="P30411"/>
<dbReference type="SIGNOR" id="P30411"/>
<dbReference type="BioGRID-ORCS" id="624">
    <property type="hits" value="12 hits in 1155 CRISPR screens"/>
</dbReference>
<dbReference type="ChiTaRS" id="BDKRB2">
    <property type="organism name" value="human"/>
</dbReference>
<dbReference type="GeneWiki" id="Bradykinin_receptor_B2"/>
<dbReference type="GenomeRNAi" id="624"/>
<dbReference type="Pharos" id="P30411">
    <property type="development level" value="Tclin"/>
</dbReference>
<dbReference type="PRO" id="PR:P30411"/>
<dbReference type="Proteomes" id="UP000005640">
    <property type="component" value="Chromosome 14"/>
</dbReference>
<dbReference type="RNAct" id="P30411">
    <property type="molecule type" value="protein"/>
</dbReference>
<dbReference type="Bgee" id="ENSG00000168398">
    <property type="expression patterns" value="Expressed in stromal cell of endometrium and 145 other cell types or tissues"/>
</dbReference>
<dbReference type="GO" id="GO:0005768">
    <property type="term" value="C:endosome"/>
    <property type="evidence" value="ECO:0000314"/>
    <property type="project" value="BHF-UCL"/>
</dbReference>
<dbReference type="GO" id="GO:0005886">
    <property type="term" value="C:plasma membrane"/>
    <property type="evidence" value="ECO:0000314"/>
    <property type="project" value="BHF-UCL"/>
</dbReference>
<dbReference type="GO" id="GO:0004947">
    <property type="term" value="F:bradykinin receptor activity"/>
    <property type="evidence" value="ECO:0000314"/>
    <property type="project" value="UniProtKB"/>
</dbReference>
<dbReference type="GO" id="GO:0004435">
    <property type="term" value="F:phosphatidylinositol-4,5-bisphosphate phospholipase C activity"/>
    <property type="evidence" value="ECO:0000304"/>
    <property type="project" value="ProtInc"/>
</dbReference>
<dbReference type="GO" id="GO:0002020">
    <property type="term" value="F:protease binding"/>
    <property type="evidence" value="ECO:0000353"/>
    <property type="project" value="BHF-UCL"/>
</dbReference>
<dbReference type="GO" id="GO:0046982">
    <property type="term" value="F:protein heterodimerization activity"/>
    <property type="evidence" value="ECO:0000353"/>
    <property type="project" value="BHF-UCL"/>
</dbReference>
<dbReference type="GO" id="GO:0031702">
    <property type="term" value="F:type 1 angiotensin receptor binding"/>
    <property type="evidence" value="ECO:0000353"/>
    <property type="project" value="BHF-UCL"/>
</dbReference>
<dbReference type="GO" id="GO:0050482">
    <property type="term" value="P:arachidonate secretion"/>
    <property type="evidence" value="ECO:0000314"/>
    <property type="project" value="BHF-UCL"/>
</dbReference>
<dbReference type="GO" id="GO:0008015">
    <property type="term" value="P:blood circulation"/>
    <property type="evidence" value="ECO:0000303"/>
    <property type="project" value="ProtInc"/>
</dbReference>
<dbReference type="GO" id="GO:0007169">
    <property type="term" value="P:cell surface receptor protein tyrosine kinase signaling pathway"/>
    <property type="evidence" value="ECO:0000304"/>
    <property type="project" value="ProtInc"/>
</dbReference>
<dbReference type="GO" id="GO:0007166">
    <property type="term" value="P:cell surface receptor signaling pathway"/>
    <property type="evidence" value="ECO:0000304"/>
    <property type="project" value="ProtInc"/>
</dbReference>
<dbReference type="GO" id="GO:0007186">
    <property type="term" value="P:G protein-coupled receptor signaling pathway"/>
    <property type="evidence" value="ECO:0000318"/>
    <property type="project" value="GO_Central"/>
</dbReference>
<dbReference type="GO" id="GO:0006954">
    <property type="term" value="P:inflammatory response"/>
    <property type="evidence" value="ECO:0000305"/>
    <property type="project" value="BHF-UCL"/>
</dbReference>
<dbReference type="GO" id="GO:1990127">
    <property type="term" value="P:intrinsic apoptotic signaling pathway in response to osmotic stress by p53 class mediator"/>
    <property type="evidence" value="ECO:0007669"/>
    <property type="project" value="Ensembl"/>
</dbReference>
<dbReference type="GO" id="GO:1902239">
    <property type="term" value="P:negative regulation of intrinsic apoptotic signaling pathway in response to osmotic stress by p53 class mediator"/>
    <property type="evidence" value="ECO:0007669"/>
    <property type="project" value="Ensembl"/>
</dbReference>
<dbReference type="GO" id="GO:0007204">
    <property type="term" value="P:positive regulation of cytosolic calcium ion concentration"/>
    <property type="evidence" value="ECO:0000304"/>
    <property type="project" value="ProtInc"/>
</dbReference>
<dbReference type="GO" id="GO:0043114">
    <property type="term" value="P:regulation of vascular permeability"/>
    <property type="evidence" value="ECO:0000305"/>
    <property type="project" value="BHF-UCL"/>
</dbReference>
<dbReference type="GO" id="GO:0019229">
    <property type="term" value="P:regulation of vasoconstriction"/>
    <property type="evidence" value="ECO:0000305"/>
    <property type="project" value="BHF-UCL"/>
</dbReference>
<dbReference type="GO" id="GO:0009651">
    <property type="term" value="P:response to salt stress"/>
    <property type="evidence" value="ECO:0007669"/>
    <property type="project" value="Ensembl"/>
</dbReference>
<dbReference type="GO" id="GO:0006939">
    <property type="term" value="P:smooth muscle contraction"/>
    <property type="evidence" value="ECO:0000305"/>
    <property type="project" value="BHF-UCL"/>
</dbReference>
<dbReference type="GO" id="GO:0042310">
    <property type="term" value="P:vasoconstriction"/>
    <property type="evidence" value="ECO:0007669"/>
    <property type="project" value="InterPro"/>
</dbReference>
<dbReference type="GO" id="GO:0042311">
    <property type="term" value="P:vasodilation"/>
    <property type="evidence" value="ECO:0000314"/>
    <property type="project" value="UniProt"/>
</dbReference>
<dbReference type="CDD" id="cd15381">
    <property type="entry name" value="7tmA_BK-2"/>
    <property type="match status" value="1"/>
</dbReference>
<dbReference type="FunFam" id="1.20.1070.10:FF:000201">
    <property type="entry name" value="Bradykinin receptor B2"/>
    <property type="match status" value="1"/>
</dbReference>
<dbReference type="Gene3D" id="1.20.1070.10">
    <property type="entry name" value="Rhodopsin 7-helix transmembrane proteins"/>
    <property type="match status" value="1"/>
</dbReference>
<dbReference type="InterPro" id="IPR001504">
    <property type="entry name" value="Brdyknn_2_rcpt"/>
</dbReference>
<dbReference type="InterPro" id="IPR000496">
    <property type="entry name" value="Brdyknn_rcpt"/>
</dbReference>
<dbReference type="InterPro" id="IPR050119">
    <property type="entry name" value="CCR1-9-like"/>
</dbReference>
<dbReference type="InterPro" id="IPR000276">
    <property type="entry name" value="GPCR_Rhodpsn"/>
</dbReference>
<dbReference type="InterPro" id="IPR017452">
    <property type="entry name" value="GPCR_Rhodpsn_7TM"/>
</dbReference>
<dbReference type="PANTHER" id="PTHR10489:SF957">
    <property type="entry name" value="B2 BRADYKININ RECEPTOR"/>
    <property type="match status" value="1"/>
</dbReference>
<dbReference type="PANTHER" id="PTHR10489">
    <property type="entry name" value="CELL ADHESION MOLECULE"/>
    <property type="match status" value="1"/>
</dbReference>
<dbReference type="Pfam" id="PF00001">
    <property type="entry name" value="7tm_1"/>
    <property type="match status" value="1"/>
</dbReference>
<dbReference type="PRINTS" id="PR00425">
    <property type="entry name" value="BRADYKININR"/>
</dbReference>
<dbReference type="PRINTS" id="PR00994">
    <property type="entry name" value="BRADYKINNB2R"/>
</dbReference>
<dbReference type="PRINTS" id="PR00237">
    <property type="entry name" value="GPCRRHODOPSN"/>
</dbReference>
<dbReference type="SUPFAM" id="SSF81321">
    <property type="entry name" value="Family A G protein-coupled receptor-like"/>
    <property type="match status" value="1"/>
</dbReference>
<dbReference type="PROSITE" id="PS00237">
    <property type="entry name" value="G_PROTEIN_RECEP_F1_1"/>
    <property type="match status" value="1"/>
</dbReference>
<dbReference type="PROSITE" id="PS50262">
    <property type="entry name" value="G_PROTEIN_RECEP_F1_2"/>
    <property type="match status" value="1"/>
</dbReference>
<organism>
    <name type="scientific">Homo sapiens</name>
    <name type="common">Human</name>
    <dbReference type="NCBI Taxonomy" id="9606"/>
    <lineage>
        <taxon>Eukaryota</taxon>
        <taxon>Metazoa</taxon>
        <taxon>Chordata</taxon>
        <taxon>Craniata</taxon>
        <taxon>Vertebrata</taxon>
        <taxon>Euteleostomi</taxon>
        <taxon>Mammalia</taxon>
        <taxon>Eutheria</taxon>
        <taxon>Euarchontoglires</taxon>
        <taxon>Primates</taxon>
        <taxon>Haplorrhini</taxon>
        <taxon>Catarrhini</taxon>
        <taxon>Hominidae</taxon>
        <taxon>Homo</taxon>
    </lineage>
</organism>
<keyword id="KW-0002">3D-structure</keyword>
<keyword id="KW-0025">Alternative splicing</keyword>
<keyword id="KW-1003">Cell membrane</keyword>
<keyword id="KW-0903">Direct protein sequencing</keyword>
<keyword id="KW-1015">Disulfide bond</keyword>
<keyword id="KW-0297">G-protein coupled receptor</keyword>
<keyword id="KW-0325">Glycoprotein</keyword>
<keyword id="KW-0449">Lipoprotein</keyword>
<keyword id="KW-0472">Membrane</keyword>
<keyword id="KW-0564">Palmitate</keyword>
<keyword id="KW-0597">Phosphoprotein</keyword>
<keyword id="KW-1267">Proteomics identification</keyword>
<keyword id="KW-0675">Receptor</keyword>
<keyword id="KW-1185">Reference proteome</keyword>
<keyword id="KW-0807">Transducer</keyword>
<keyword id="KW-0812">Transmembrane</keyword>
<keyword id="KW-1133">Transmembrane helix</keyword>
<gene>
    <name type="primary">BDKRB2</name>
    <name type="synonym">BKR2</name>
</gene>
<reference key="1">
    <citation type="journal article" date="1992" name="Biochem. Biophys. Res. Commun.">
        <title>Cloning and pharmacological characterization of a human bradykinin (BK-2) receptor.</title>
        <authorList>
            <person name="Hess J.F.R."/>
            <person name="Borkowski J.A."/>
            <person name="Young G.S."/>
            <person name="Strader C.D."/>
            <person name="Ransom R.W."/>
        </authorList>
    </citation>
    <scope>NUCLEOTIDE SEQUENCE [MRNA] (ISOFORM SHORT)</scope>
    <scope>FUNCTION</scope>
    <scope>SUBCELLULAR LOCATION</scope>
</reference>
<reference key="2">
    <citation type="journal article" date="1993" name="Genomics">
        <title>Human bradykinin B2 receptor: nucleotide sequence analysis and assignment to chromosome 14.</title>
        <authorList>
            <person name="Powell S.J."/>
            <person name="Slynn G."/>
            <person name="Thomas C."/>
            <person name="Hopkins B."/>
            <person name="Briggs I."/>
            <person name="Graham A."/>
        </authorList>
    </citation>
    <scope>NUCLEOTIDE SEQUENCE [GENOMIC DNA] (ISOFORM SHORT)</scope>
</reference>
<reference key="3">
    <citation type="journal article" date="1993" name="Mol. Pharmacol.">
        <title>Cloned murine bradykinin receptor exhibits a mixed B1 and B2 pharmacological selectivity.</title>
        <authorList>
            <person name="McIntyre P."/>
            <person name="Phillips E."/>
            <person name="Skidmore E."/>
            <person name="Brown M."/>
            <person name="Webb M."/>
        </authorList>
    </citation>
    <scope>NUCLEOTIDE SEQUENCE [MRNA] (ISOFORM SHORT)</scope>
</reference>
<reference key="4">
    <citation type="journal article" date="1992" name="Biochem. Biophys. Res. Commun.">
        <title>Molecular cloning, functional expression and pharmacological characterization of a human bradykinin B2 receptor gene.</title>
        <authorList>
            <person name="Eggerickx D."/>
            <person name="Raspe E."/>
            <person name="Bertrand D."/>
            <person name="Vassart G."/>
            <person name="Parmentier M."/>
        </authorList>
    </citation>
    <scope>NUCLEOTIDE SEQUENCE [GENOMIC DNA] (ISOFORM SHORT)</scope>
    <scope>FUNCTION</scope>
</reference>
<reference key="5">
    <citation type="journal article" date="1994" name="Genomics">
        <title>Structure and chromosomal localization of the gene (BDKRB2) encoding human bradykinin B2 receptor.</title>
        <authorList>
            <person name="Ma J.-X."/>
            <person name="Wang D.-Z."/>
            <person name="Ward D.C."/>
            <person name="Chen L."/>
            <person name="Dessai T."/>
            <person name="Chao J."/>
            <person name="Chao L."/>
        </authorList>
    </citation>
    <scope>NUCLEOTIDE SEQUENCE [GENOMIC DNA] (ISOFORM LONG)</scope>
    <scope>TISSUE SPECIFICITY</scope>
</reference>
<reference key="6">
    <citation type="journal article" date="1995" name="Biochem. Biophys. Res. Commun.">
        <title>Identification of polymorphic sites of the human bradykinin B2 receptor gene.</title>
        <authorList>
            <person name="Braun A."/>
            <person name="Kammerer S."/>
            <person name="Boehme E."/>
            <person name="Mueller B."/>
            <person name="Roscher A.A."/>
        </authorList>
    </citation>
    <scope>NUCLEOTIDE SEQUENCE [MRNA] (ISOFORM LONG)</scope>
    <scope>VARIANT CYS-14</scope>
</reference>
<reference key="7">
    <citation type="submission" date="2003-04" db="EMBL/GenBank/DDBJ databases">
        <title>cDNA clones of human proteins involved in signal transduction sequenced by the Guthrie cDNA resource center (www.cdna.org).</title>
        <authorList>
            <person name="Warren C.N."/>
            <person name="Aronstam R.S."/>
            <person name="Sharma S.V."/>
        </authorList>
    </citation>
    <scope>NUCLEOTIDE SEQUENCE [LARGE SCALE MRNA] (ISOFORM LONG)</scope>
    <source>
        <tissue>Lung</tissue>
    </source>
</reference>
<reference key="8">
    <citation type="submission" date="2001-06" db="EMBL/GenBank/DDBJ databases">
        <authorList>
            <consortium name="SeattleSNPs variation discovery resource"/>
        </authorList>
    </citation>
    <scope>NUCLEOTIDE SEQUENCE [GENOMIC DNA]</scope>
    <scope>VARIANTS CYS-14 AND GLU-354</scope>
</reference>
<reference key="9">
    <citation type="journal article" date="2004" name="Genome Res.">
        <title>The status, quality, and expansion of the NIH full-length cDNA project: the Mammalian Gene Collection (MGC).</title>
        <authorList>
            <consortium name="The MGC Project Team"/>
        </authorList>
    </citation>
    <scope>NUCLEOTIDE SEQUENCE [LARGE SCALE MRNA] (ISOFORM LONG)</scope>
    <source>
        <tissue>Lung</tissue>
    </source>
</reference>
<reference key="10">
    <citation type="journal article" date="1996" name="Biochemistry">
        <title>Structure of the bradykinin B2 receptors' amino terminus.</title>
        <authorList>
            <person name="Abdalla S."/>
            <person name="Godovac-Zimmermann J."/>
            <person name="Braun A."/>
            <person name="Roscher A.A."/>
            <person name="Mueller-Esterl W."/>
            <person name="Quitterer U."/>
        </authorList>
    </citation>
    <scope>PROTEIN SEQUENCE OF 1-9 AND 17-30</scope>
    <source>
        <tissue>Foreskin</tissue>
    </source>
</reference>
<reference key="11">
    <citation type="journal article" date="2008" name="Biochemistry">
        <title>Regulation of G protein-coupled receptor activities by the platelet-endothelial cell adhesion molecule, PECAM-1.</title>
        <authorList>
            <person name="Yeh J.C."/>
            <person name="Otte L.A."/>
            <person name="Frangos J.A."/>
        </authorList>
    </citation>
    <scope>INTERACTION WITH PECAM1</scope>
</reference>
<reference key="12">
    <citation type="journal article" date="2001" name="J. Biol. Chem.">
        <title>Determination of bradykinin B2 receptor in vivo phosphorylation sites and their role in receptor function.</title>
        <authorList>
            <person name="Blaukat A."/>
            <person name="Pizard A."/>
            <person name="Breit A."/>
            <person name="Wernstedt C."/>
            <person name="Alhenc-Gelas F."/>
            <person name="Muller-Esterl W."/>
            <person name="Dikic I."/>
        </authorList>
    </citation>
    <scope>PHOSPHORYLATION AT SER-373 AND SER-375</scope>
</reference>
<proteinExistence type="evidence at protein level"/>
<accession>P30411</accession>
<sequence length="391" mass="44461">MFSPWKISMFLSVREDSVPTTASFSADMLNVTLQGPTLNGTFAQSKCPQVEWLGWLNTIQPPFLWVLFVLATLENIFVLSVFCLHKSSCTVAEIYLGNLAAADLILACGLPFWAITISNNFDWLFGETLCRVVNAIISMNLYSSICFLMLVSIDRYLALVKTMSMGRMRGVRWAKLYSLVIWGCTLLLSSPMLVFRTMKEYSDEGHNVTACVISYPSLIWEVFTNMLLNVVGFLLPLSVITFCTMQIMQVLRNNEMQKFKEIQTERRATVLVLVVLLLFIICWLPFQISTFLDTLHRLGILSSCQDERIIDVITQIASFMAYSNSCLNPLVYVIVGKRFRKKSWEVYQGVCQKGGCRSEPIQMENSMGTLRTSISVERQIHKLQDWAGSRQ</sequence>
<evidence type="ECO:0000250" key="1">
    <source>
        <dbReference type="UniProtKB" id="P25023"/>
    </source>
</evidence>
<evidence type="ECO:0000255" key="2"/>
<evidence type="ECO:0000255" key="3">
    <source>
        <dbReference type="PROSITE-ProRule" id="PRU00521"/>
    </source>
</evidence>
<evidence type="ECO:0000269" key="4">
    <source>
    </source>
</evidence>
<evidence type="ECO:0000269" key="5">
    <source>
    </source>
</evidence>
<evidence type="ECO:0000269" key="6">
    <source>
    </source>
</evidence>
<evidence type="ECO:0000269" key="7">
    <source>
    </source>
</evidence>
<evidence type="ECO:0000269" key="8">
    <source>
    </source>
</evidence>
<evidence type="ECO:0000269" key="9">
    <source>
    </source>
</evidence>
<evidence type="ECO:0000269" key="10">
    <source ref="8"/>
</evidence>
<evidence type="ECO:0000303" key="11">
    <source>
    </source>
</evidence>
<evidence type="ECO:0000303" key="12">
    <source>
    </source>
</evidence>
<evidence type="ECO:0000305" key="13">
    <source>
    </source>
</evidence>
<evidence type="ECO:0007829" key="14">
    <source>
        <dbReference type="PDB" id="7F2O"/>
    </source>
</evidence>
<evidence type="ECO:0007829" key="15">
    <source>
        <dbReference type="PDB" id="7F6I"/>
    </source>
</evidence>
<protein>
    <recommendedName>
        <fullName>B2 bradykinin receptor</fullName>
        <shortName>B2R</shortName>
        <shortName>BK-2 receptor</shortName>
    </recommendedName>
</protein>
<comment type="function">
    <text evidence="5 6">Receptor for bradykinin. It is associated with G proteins that activate a phosphatidylinositol-calcium second messenger system.</text>
</comment>
<comment type="subunit">
    <text evidence="7">Forms a complex with PECAM1 and GNAQ. Interacts with PECAM1.</text>
</comment>
<comment type="interaction">
    <interactant intactId="EBI-6623386">
        <id>P30411</id>
    </interactant>
    <interactant intactId="EBI-6623273">
        <id>PRO_0000006688</id>
        <label>KNG1</label>
        <dbReference type="UniProtKB" id="P01042"/>
    </interactant>
    <organismsDiffer>false</organismsDiffer>
    <experiments>2</experiments>
</comment>
<comment type="subcellular location">
    <subcellularLocation>
        <location evidence="13">Cell membrane</location>
        <topology evidence="2">Multi-pass membrane protein</topology>
    </subcellularLocation>
</comment>
<comment type="alternative products">
    <event type="alternative splicing"/>
    <isoform>
        <id>P30411-1</id>
        <name>Long</name>
        <sequence type="displayed"/>
    </isoform>
    <isoform>
        <id>P30411-2</id>
        <name>Short</name>
        <sequence type="described" ref="VSP_001865"/>
    </isoform>
</comment>
<comment type="tissue specificity">
    <text evidence="9">Ubiquitous. Widespread in normal smooth muscle tissue and neurons.</text>
</comment>
<comment type="similarity">
    <text evidence="3">Belongs to the G-protein coupled receptor 1 family. Bradykinin receptor subfamily. BDKRB2 sub-subfamily.</text>
</comment>
<comment type="online information" name="Wikipedia">
    <link uri="https://en.wikipedia.org/wiki/Bradykinin_receptor"/>
    <text>Bradykinin receptor entry</text>
</comment>